<protein>
    <recommendedName>
        <fullName evidence="1">UPF0181 protein YoaH</fullName>
    </recommendedName>
</protein>
<evidence type="ECO:0000255" key="1">
    <source>
        <dbReference type="HAMAP-Rule" id="MF_00507"/>
    </source>
</evidence>
<accession>B1XH79</accession>
<feature type="chain" id="PRO_1000127045" description="UPF0181 protein YoaH">
    <location>
        <begin position="1"/>
        <end position="59"/>
    </location>
</feature>
<comment type="similarity">
    <text evidence="1">Belongs to the UPF0181 family.</text>
</comment>
<name>YOAH_ECODH</name>
<sequence length="59" mass="6554">MFAGLPSLTHEQQQKAVERIQELMAQGMSSGQAIALVAEELRANHSGERIVARFEDEDE</sequence>
<proteinExistence type="inferred from homology"/>
<gene>
    <name evidence="1" type="primary">yoaH</name>
    <name type="ordered locus">ECDH10B_1949</name>
</gene>
<reference key="1">
    <citation type="journal article" date="2008" name="J. Bacteriol.">
        <title>The complete genome sequence of Escherichia coli DH10B: insights into the biology of a laboratory workhorse.</title>
        <authorList>
            <person name="Durfee T."/>
            <person name="Nelson R."/>
            <person name="Baldwin S."/>
            <person name="Plunkett G. III"/>
            <person name="Burland V."/>
            <person name="Mau B."/>
            <person name="Petrosino J.F."/>
            <person name="Qin X."/>
            <person name="Muzny D.M."/>
            <person name="Ayele M."/>
            <person name="Gibbs R.A."/>
            <person name="Csorgo B."/>
            <person name="Posfai G."/>
            <person name="Weinstock G.M."/>
            <person name="Blattner F.R."/>
        </authorList>
    </citation>
    <scope>NUCLEOTIDE SEQUENCE [LARGE SCALE GENOMIC DNA]</scope>
    <source>
        <strain>K12 / DH10B</strain>
    </source>
</reference>
<organism>
    <name type="scientific">Escherichia coli (strain K12 / DH10B)</name>
    <dbReference type="NCBI Taxonomy" id="316385"/>
    <lineage>
        <taxon>Bacteria</taxon>
        <taxon>Pseudomonadati</taxon>
        <taxon>Pseudomonadota</taxon>
        <taxon>Gammaproteobacteria</taxon>
        <taxon>Enterobacterales</taxon>
        <taxon>Enterobacteriaceae</taxon>
        <taxon>Escherichia</taxon>
    </lineage>
</organism>
<dbReference type="EMBL" id="CP000948">
    <property type="protein sequence ID" value="ACB03009.1"/>
    <property type="molecule type" value="Genomic_DNA"/>
</dbReference>
<dbReference type="RefSeq" id="WP_000457334.1">
    <property type="nucleotide sequence ID" value="NC_010473.1"/>
</dbReference>
<dbReference type="SMR" id="B1XH79"/>
<dbReference type="KEGG" id="ecd:ECDH10B_1949"/>
<dbReference type="HOGENOM" id="CLU_185263_0_0_6"/>
<dbReference type="HAMAP" id="MF_00507">
    <property type="entry name" value="UPF0181"/>
    <property type="match status" value="1"/>
</dbReference>
<dbReference type="InterPro" id="IPR005371">
    <property type="entry name" value="UPF0181"/>
</dbReference>
<dbReference type="NCBIfam" id="NF003476">
    <property type="entry name" value="PRK05114.1"/>
    <property type="match status" value="1"/>
</dbReference>
<dbReference type="Pfam" id="PF03701">
    <property type="entry name" value="UPF0181"/>
    <property type="match status" value="1"/>
</dbReference>